<organism>
    <name type="scientific">Caenorhabditis elegans</name>
    <dbReference type="NCBI Taxonomy" id="6239"/>
    <lineage>
        <taxon>Eukaryota</taxon>
        <taxon>Metazoa</taxon>
        <taxon>Ecdysozoa</taxon>
        <taxon>Nematoda</taxon>
        <taxon>Chromadorea</taxon>
        <taxon>Rhabditida</taxon>
        <taxon>Rhabditina</taxon>
        <taxon>Rhabditomorpha</taxon>
        <taxon>Rhabditoidea</taxon>
        <taxon>Rhabditidae</taxon>
        <taxon>Peloderinae</taxon>
        <taxon>Caenorhabditis</taxon>
    </lineage>
</organism>
<sequence>MYFHSTAIILFLNKIDLFEIKITHTNITVAFPDYEGPRERDCALEYIRVQFISLNNNKNRKIYQHVTSATDTARIQVVIDMLFDIIISASLKMVGV</sequence>
<reference key="1">
    <citation type="journal article" date="1998" name="Science">
        <title>Genome sequence of the nematode C. elegans: a platform for investigating biology.</title>
        <authorList>
            <consortium name="The C. elegans sequencing consortium"/>
        </authorList>
    </citation>
    <scope>NUCLEOTIDE SEQUENCE [LARGE SCALE GENOMIC DNA]</scope>
    <source>
        <strain>Bristol N2</strain>
    </source>
</reference>
<reference key="2">
    <citation type="journal article" date="1999" name="Nat. Genet.">
        <title>The complete family of genes encoding G proteins of Caenorhabditis elegans.</title>
        <authorList>
            <person name="Jansen G."/>
            <person name="Thijssen K.L."/>
            <person name="Werner P."/>
            <person name="van der Horst M."/>
            <person name="Hazendonk E."/>
            <person name="Plasterk R.H.A."/>
        </authorList>
    </citation>
    <scope>GENE FAMILY</scope>
    <scope>NOMENCLATURE</scope>
</reference>
<reference key="3">
    <citation type="journal article" date="2007" name="Dev. Biol.">
        <title>Multiple sensory G proteins in the olfactory, gustatory and nociceptive neurons modulate longevity in Caenorhabditis elegans.</title>
        <authorList>
            <person name="Lans H."/>
            <person name="Jansen G."/>
        </authorList>
    </citation>
    <scope>FUNCTION</scope>
</reference>
<reference key="4">
    <citation type="journal article" date="2011" name="Aging Cell">
        <title>GPA-9 is a novel regulator of innate immunity against Escherichia coli foods in adult Caenorhabditis elegans.</title>
        <authorList>
            <person name="Hahm J.H."/>
            <person name="Kim S."/>
            <person name="Paik Y.K."/>
        </authorList>
    </citation>
    <scope>FUNCTION</scope>
    <scope>TISSUE SPECIFICITY</scope>
</reference>
<accession>Q20910</accession>
<accession>G3MU18</accession>
<accession>G3MU19</accession>
<name>GPA9_CAEEL</name>
<gene>
    <name evidence="6" type="primary">gpa-9</name>
    <name evidence="6" type="ORF">F56H9.4</name>
</gene>
<evidence type="ECO:0000250" key="1">
    <source>
        <dbReference type="UniProtKB" id="P63096"/>
    </source>
</evidence>
<evidence type="ECO:0000255" key="2">
    <source>
        <dbReference type="PROSITE-ProRule" id="PRU01230"/>
    </source>
</evidence>
<evidence type="ECO:0000269" key="3">
    <source>
    </source>
</evidence>
<evidence type="ECO:0000269" key="4">
    <source>
    </source>
</evidence>
<evidence type="ECO:0000305" key="5"/>
<evidence type="ECO:0000312" key="6">
    <source>
        <dbReference type="WormBase" id="F56H9.4b"/>
    </source>
</evidence>
<comment type="function">
    <text evidence="1 3 4">Guanine nucleotide-binding proteins (G proteins) are involved as modulators or transducers in various transmembrane signaling systems (By similarity). Plays a role in innate immunity and maintaining survival in response to metabolites of E.coli (PubMed:21108728). This might be by regulating the expression and signaling of genes such as lys-8, ins-7 and daf-28 (PubMed:21108728). Has a role in lifespan to promote longevity (PubMed:17187771, PubMed:21108728).</text>
</comment>
<comment type="subunit">
    <text>G proteins are composed of 3 units; alpha, beta and gamma. The alpha chain contains the guanine nucleotide binding site.</text>
</comment>
<comment type="tissue specificity">
    <text evidence="4">Expressed in ASJ neurons.</text>
</comment>
<comment type="similarity">
    <text evidence="5">Belongs to the G-alpha family.</text>
</comment>
<dbReference type="EMBL" id="BX284605">
    <property type="protein sequence ID" value="CCD31082.1"/>
    <property type="molecule type" value="Genomic_DNA"/>
</dbReference>
<dbReference type="PIR" id="T22810">
    <property type="entry name" value="T22810"/>
</dbReference>
<dbReference type="RefSeq" id="NP_001256444.1">
    <property type="nucleotide sequence ID" value="NM_001269515.3"/>
</dbReference>
<dbReference type="SMR" id="Q20910"/>
<dbReference type="FunCoup" id="Q20910">
    <property type="interactions" value="9"/>
</dbReference>
<dbReference type="STRING" id="6239.F56H9.4b.1"/>
<dbReference type="PaxDb" id="6239-F56H9.4a"/>
<dbReference type="EnsemblMetazoa" id="F56H9.4b.1">
    <property type="protein sequence ID" value="F56H9.4b.1"/>
    <property type="gene ID" value="WBGene00001671"/>
</dbReference>
<dbReference type="GeneID" id="191659"/>
<dbReference type="KEGG" id="cel:CELE_F56H9.4"/>
<dbReference type="UCSC" id="F56H9.4">
    <property type="organism name" value="c. elegans"/>
</dbReference>
<dbReference type="AGR" id="WB:WBGene00001671"/>
<dbReference type="CTD" id="191659"/>
<dbReference type="WormBase" id="F56H9.4b">
    <property type="protein sequence ID" value="CE46135"/>
    <property type="gene ID" value="WBGene00001671"/>
    <property type="gene designation" value="gpa-9"/>
</dbReference>
<dbReference type="eggNOG" id="KOG0082">
    <property type="taxonomic scope" value="Eukaryota"/>
</dbReference>
<dbReference type="GeneTree" id="ENSGT00970000196357"/>
<dbReference type="HOGENOM" id="CLU_014184_6_0_1"/>
<dbReference type="InParanoid" id="Q20910"/>
<dbReference type="OMA" id="KITHTNI"/>
<dbReference type="PhylomeDB" id="Q20910"/>
<dbReference type="PRO" id="PR:Q20910"/>
<dbReference type="Proteomes" id="UP000001940">
    <property type="component" value="Chromosome V"/>
</dbReference>
<dbReference type="GO" id="GO:0031683">
    <property type="term" value="F:G-protein beta/gamma-subunit complex binding"/>
    <property type="evidence" value="ECO:0007669"/>
    <property type="project" value="InterPro"/>
</dbReference>
<dbReference type="GO" id="GO:0005525">
    <property type="term" value="F:GTP binding"/>
    <property type="evidence" value="ECO:0007669"/>
    <property type="project" value="UniProtKB-KW"/>
</dbReference>
<dbReference type="GO" id="GO:0003924">
    <property type="term" value="F:GTPase activity"/>
    <property type="evidence" value="ECO:0007669"/>
    <property type="project" value="InterPro"/>
</dbReference>
<dbReference type="GO" id="GO:0007186">
    <property type="term" value="P:G protein-coupled receptor signaling pathway"/>
    <property type="evidence" value="ECO:0007669"/>
    <property type="project" value="InterPro"/>
</dbReference>
<dbReference type="FunFam" id="3.40.50.300:FF:000720">
    <property type="entry name" value="Guanine nucleotide-binding protein G(k) subunit alpha"/>
    <property type="match status" value="1"/>
</dbReference>
<dbReference type="Gene3D" id="3.40.50.300">
    <property type="entry name" value="P-loop containing nucleotide triphosphate hydrolases"/>
    <property type="match status" value="1"/>
</dbReference>
<dbReference type="InterPro" id="IPR001019">
    <property type="entry name" value="Gprotein_alpha_su"/>
</dbReference>
<dbReference type="InterPro" id="IPR027417">
    <property type="entry name" value="P-loop_NTPase"/>
</dbReference>
<dbReference type="PANTHER" id="PTHR10218">
    <property type="entry name" value="GTP-BINDING PROTEIN ALPHA SUBUNIT"/>
    <property type="match status" value="1"/>
</dbReference>
<dbReference type="PANTHER" id="PTHR10218:SF196">
    <property type="entry name" value="GUANINE NUCLEOTIDE-BINDING PROTEIN ALPHA-8 SUBUNIT"/>
    <property type="match status" value="1"/>
</dbReference>
<dbReference type="Pfam" id="PF00503">
    <property type="entry name" value="G-alpha"/>
    <property type="match status" value="1"/>
</dbReference>
<dbReference type="SUPFAM" id="SSF52540">
    <property type="entry name" value="P-loop containing nucleoside triphosphate hydrolases"/>
    <property type="match status" value="1"/>
</dbReference>
<dbReference type="PROSITE" id="PS51882">
    <property type="entry name" value="G_ALPHA"/>
    <property type="match status" value="1"/>
</dbReference>
<proteinExistence type="evidence at transcript level"/>
<keyword id="KW-0342">GTP-binding</keyword>
<keyword id="KW-0547">Nucleotide-binding</keyword>
<keyword id="KW-1185">Reference proteome</keyword>
<keyword id="KW-0807">Transducer</keyword>
<feature type="chain" id="PRO_0000203644" description="Guanine nucleotide-binding protein alpha-9 subunit">
    <location>
        <begin position="1"/>
        <end position="96"/>
    </location>
</feature>
<feature type="domain" description="G-alpha" evidence="2">
    <location>
        <begin position="2"/>
        <end position="96"/>
    </location>
</feature>
<feature type="region of interest" description="G1 motif" evidence="2">
    <location>
        <begin position="9"/>
        <end position="16"/>
    </location>
</feature>
<feature type="region of interest" description="G2 motif" evidence="2">
    <location>
        <begin position="67"/>
        <end position="72"/>
    </location>
</feature>
<feature type="binding site" evidence="1">
    <location>
        <begin position="13"/>
        <end position="16"/>
    </location>
    <ligand>
        <name>GTP</name>
        <dbReference type="ChEBI" id="CHEBI:37565"/>
    </ligand>
</feature>
<feature type="binding site" evidence="1">
    <location>
        <position position="69"/>
    </location>
    <ligand>
        <name>GTP</name>
        <dbReference type="ChEBI" id="CHEBI:37565"/>
    </ligand>
</feature>
<protein>
    <recommendedName>
        <fullName>Guanine nucleotide-binding protein alpha-9 subunit</fullName>
    </recommendedName>
</protein>